<dbReference type="EC" id="2.4.99.17" evidence="1"/>
<dbReference type="EMBL" id="AM263198">
    <property type="protein sequence ID" value="CAK20962.1"/>
    <property type="molecule type" value="Genomic_DNA"/>
</dbReference>
<dbReference type="RefSeq" id="WP_011702333.1">
    <property type="nucleotide sequence ID" value="NC_008555.1"/>
</dbReference>
<dbReference type="SMR" id="A0AIY0"/>
<dbReference type="STRING" id="386043.lwe1544"/>
<dbReference type="GeneID" id="61189421"/>
<dbReference type="KEGG" id="lwe:lwe1544"/>
<dbReference type="eggNOG" id="COG0809">
    <property type="taxonomic scope" value="Bacteria"/>
</dbReference>
<dbReference type="HOGENOM" id="CLU_039110_1_0_9"/>
<dbReference type="OrthoDB" id="9805933at2"/>
<dbReference type="UniPathway" id="UPA00392"/>
<dbReference type="Proteomes" id="UP000000779">
    <property type="component" value="Chromosome"/>
</dbReference>
<dbReference type="GO" id="GO:0005737">
    <property type="term" value="C:cytoplasm"/>
    <property type="evidence" value="ECO:0007669"/>
    <property type="project" value="UniProtKB-SubCell"/>
</dbReference>
<dbReference type="GO" id="GO:0051075">
    <property type="term" value="F:S-adenosylmethionine:tRNA ribosyltransferase-isomerase activity"/>
    <property type="evidence" value="ECO:0007669"/>
    <property type="project" value="UniProtKB-EC"/>
</dbReference>
<dbReference type="GO" id="GO:0008616">
    <property type="term" value="P:queuosine biosynthetic process"/>
    <property type="evidence" value="ECO:0007669"/>
    <property type="project" value="UniProtKB-UniRule"/>
</dbReference>
<dbReference type="GO" id="GO:0002099">
    <property type="term" value="P:tRNA wobble guanine modification"/>
    <property type="evidence" value="ECO:0007669"/>
    <property type="project" value="TreeGrafter"/>
</dbReference>
<dbReference type="FunFam" id="2.40.10.240:FF:000002">
    <property type="entry name" value="S-adenosylmethionine:tRNA ribosyltransferase-isomerase"/>
    <property type="match status" value="1"/>
</dbReference>
<dbReference type="FunFam" id="3.40.1780.10:FF:000001">
    <property type="entry name" value="S-adenosylmethionine:tRNA ribosyltransferase-isomerase"/>
    <property type="match status" value="1"/>
</dbReference>
<dbReference type="Gene3D" id="2.40.10.240">
    <property type="entry name" value="QueA-like"/>
    <property type="match status" value="1"/>
</dbReference>
<dbReference type="Gene3D" id="3.40.1780.10">
    <property type="entry name" value="QueA-like"/>
    <property type="match status" value="1"/>
</dbReference>
<dbReference type="HAMAP" id="MF_00113">
    <property type="entry name" value="QueA"/>
    <property type="match status" value="1"/>
</dbReference>
<dbReference type="InterPro" id="IPR003699">
    <property type="entry name" value="QueA"/>
</dbReference>
<dbReference type="InterPro" id="IPR042118">
    <property type="entry name" value="QueA_dom1"/>
</dbReference>
<dbReference type="InterPro" id="IPR042119">
    <property type="entry name" value="QueA_dom2"/>
</dbReference>
<dbReference type="InterPro" id="IPR036100">
    <property type="entry name" value="QueA_sf"/>
</dbReference>
<dbReference type="NCBIfam" id="NF001140">
    <property type="entry name" value="PRK00147.1"/>
    <property type="match status" value="1"/>
</dbReference>
<dbReference type="NCBIfam" id="TIGR00113">
    <property type="entry name" value="queA"/>
    <property type="match status" value="1"/>
</dbReference>
<dbReference type="PANTHER" id="PTHR30307">
    <property type="entry name" value="S-ADENOSYLMETHIONINE:TRNA RIBOSYLTRANSFERASE-ISOMERASE"/>
    <property type="match status" value="1"/>
</dbReference>
<dbReference type="PANTHER" id="PTHR30307:SF0">
    <property type="entry name" value="S-ADENOSYLMETHIONINE:TRNA RIBOSYLTRANSFERASE-ISOMERASE"/>
    <property type="match status" value="1"/>
</dbReference>
<dbReference type="Pfam" id="PF02547">
    <property type="entry name" value="Queuosine_synth"/>
    <property type="match status" value="1"/>
</dbReference>
<dbReference type="SUPFAM" id="SSF111337">
    <property type="entry name" value="QueA-like"/>
    <property type="match status" value="1"/>
</dbReference>
<comment type="function">
    <text evidence="1">Transfers and isomerizes the ribose moiety from AdoMet to the 7-aminomethyl group of 7-deazaguanine (preQ1-tRNA) to give epoxyqueuosine (oQ-tRNA).</text>
</comment>
<comment type="catalytic activity">
    <reaction evidence="1">
        <text>7-aminomethyl-7-carbaguanosine(34) in tRNA + S-adenosyl-L-methionine = epoxyqueuosine(34) in tRNA + adenine + L-methionine + 2 H(+)</text>
        <dbReference type="Rhea" id="RHEA:32155"/>
        <dbReference type="Rhea" id="RHEA-COMP:10342"/>
        <dbReference type="Rhea" id="RHEA-COMP:18582"/>
        <dbReference type="ChEBI" id="CHEBI:15378"/>
        <dbReference type="ChEBI" id="CHEBI:16708"/>
        <dbReference type="ChEBI" id="CHEBI:57844"/>
        <dbReference type="ChEBI" id="CHEBI:59789"/>
        <dbReference type="ChEBI" id="CHEBI:82833"/>
        <dbReference type="ChEBI" id="CHEBI:194443"/>
        <dbReference type="EC" id="2.4.99.17"/>
    </reaction>
</comment>
<comment type="pathway">
    <text evidence="1">tRNA modification; tRNA-queuosine biosynthesis.</text>
</comment>
<comment type="subunit">
    <text evidence="1">Monomer.</text>
</comment>
<comment type="subcellular location">
    <subcellularLocation>
        <location evidence="1">Cytoplasm</location>
    </subcellularLocation>
</comment>
<comment type="similarity">
    <text evidence="1">Belongs to the QueA family.</text>
</comment>
<protein>
    <recommendedName>
        <fullName evidence="1">S-adenosylmethionine:tRNA ribosyltransferase-isomerase</fullName>
        <ecNumber evidence="1">2.4.99.17</ecNumber>
    </recommendedName>
    <alternativeName>
        <fullName evidence="1">Queuosine biosynthesis protein QueA</fullName>
    </alternativeName>
</protein>
<keyword id="KW-0963">Cytoplasm</keyword>
<keyword id="KW-0671">Queuosine biosynthesis</keyword>
<keyword id="KW-0949">S-adenosyl-L-methionine</keyword>
<keyword id="KW-0808">Transferase</keyword>
<evidence type="ECO:0000255" key="1">
    <source>
        <dbReference type="HAMAP-Rule" id="MF_00113"/>
    </source>
</evidence>
<organism>
    <name type="scientific">Listeria welshimeri serovar 6b (strain ATCC 35897 / DSM 20650 / CCUG 15529 / CIP 8149 / NCTC 11857 / SLCC 5334 / V8)</name>
    <dbReference type="NCBI Taxonomy" id="386043"/>
    <lineage>
        <taxon>Bacteria</taxon>
        <taxon>Bacillati</taxon>
        <taxon>Bacillota</taxon>
        <taxon>Bacilli</taxon>
        <taxon>Bacillales</taxon>
        <taxon>Listeriaceae</taxon>
        <taxon>Listeria</taxon>
    </lineage>
</organism>
<reference key="1">
    <citation type="journal article" date="2006" name="J. Bacteriol.">
        <title>Whole-genome sequence of Listeria welshimeri reveals common steps in genome reduction with Listeria innocua as compared to Listeria monocytogenes.</title>
        <authorList>
            <person name="Hain T."/>
            <person name="Steinweg C."/>
            <person name="Kuenne C.T."/>
            <person name="Billion A."/>
            <person name="Ghai R."/>
            <person name="Chatterjee S.S."/>
            <person name="Domann E."/>
            <person name="Kaerst U."/>
            <person name="Goesmann A."/>
            <person name="Bekel T."/>
            <person name="Bartels D."/>
            <person name="Kaiser O."/>
            <person name="Meyer F."/>
            <person name="Puehler A."/>
            <person name="Weisshaar B."/>
            <person name="Wehland J."/>
            <person name="Liang C."/>
            <person name="Dandekar T."/>
            <person name="Lampidis R."/>
            <person name="Kreft J."/>
            <person name="Goebel W."/>
            <person name="Chakraborty T."/>
        </authorList>
    </citation>
    <scope>NUCLEOTIDE SEQUENCE [LARGE SCALE GENOMIC DNA]</scope>
    <source>
        <strain>ATCC 35897 / DSM 20650 / CCUG 15529 / CIP 8149 / NCTC 11857 / SLCC 5334 / V8</strain>
    </source>
</reference>
<name>QUEA_LISW6</name>
<sequence length="342" mass="37993">MKVEDFDFDLPEELIAQTPLLDRTSSRLMVLDKKSGEIKDQHFTDILSYLNEGDALVLNDTRVLPARLHGTKDETGAHIEVLLLKQKEGNAWETLVKPAKRIRKGGTITFGNGALKATCLEELEHGGRILEFSYEGIFYEVLEQLGEMPLPPYIKEQLADQDRYQTVYAKENGSAAAPTAGLHFTEDLLAQISAKGVEIIFVTLHVGLGTFRPVDVEDTANHKMHSEFYRLTEDAANRINKIKATGGKVVAVGTTSIRTLETIASHNEGKLVAESGWTDIFISPGYTFQAVDALITNLHLPKSTLIMLVSALSNRTNILAAYNHAVEQQYRFFSFGDAMFIH</sequence>
<proteinExistence type="inferred from homology"/>
<accession>A0AIY0</accession>
<gene>
    <name evidence="1" type="primary">queA</name>
    <name type="ordered locus">lwe1544</name>
</gene>
<feature type="chain" id="PRO_1000015232" description="S-adenosylmethionine:tRNA ribosyltransferase-isomerase">
    <location>
        <begin position="1"/>
        <end position="342"/>
    </location>
</feature>